<name>AQP6_MOUSE</name>
<dbReference type="EMBL" id="AK082699">
    <property type="protein sequence ID" value="BAC38576.1"/>
    <property type="molecule type" value="mRNA"/>
</dbReference>
<dbReference type="CCDS" id="CCDS27824.1"/>
<dbReference type="RefSeq" id="NP_780296.1">
    <property type="nucleotide sequence ID" value="NM_175087.5"/>
</dbReference>
<dbReference type="SMR" id="Q8C4A0"/>
<dbReference type="FunCoup" id="Q8C4A0">
    <property type="interactions" value="148"/>
</dbReference>
<dbReference type="STRING" id="10090.ENSMUSP00000023754"/>
<dbReference type="GlyCosmos" id="Q8C4A0">
    <property type="glycosylation" value="1 site, No reported glycans"/>
</dbReference>
<dbReference type="GlyGen" id="Q8C4A0">
    <property type="glycosylation" value="2 sites"/>
</dbReference>
<dbReference type="PhosphoSitePlus" id="Q8C4A0"/>
<dbReference type="PaxDb" id="10090-ENSMUSP00000023754"/>
<dbReference type="ProteomicsDB" id="296274"/>
<dbReference type="Antibodypedia" id="26099">
    <property type="antibodies" value="85 antibodies from 23 providers"/>
</dbReference>
<dbReference type="DNASU" id="11831"/>
<dbReference type="Ensembl" id="ENSMUST00000023754.6">
    <property type="protein sequence ID" value="ENSMUSP00000023754.6"/>
    <property type="gene ID" value="ENSMUSG00000043144.7"/>
</dbReference>
<dbReference type="GeneID" id="11831"/>
<dbReference type="KEGG" id="mmu:11831"/>
<dbReference type="UCSC" id="uc007xpw.1">
    <property type="organism name" value="mouse"/>
</dbReference>
<dbReference type="AGR" id="MGI:1341204"/>
<dbReference type="CTD" id="363"/>
<dbReference type="MGI" id="MGI:1341204">
    <property type="gene designation" value="Aqp6"/>
</dbReference>
<dbReference type="VEuPathDB" id="HostDB:ENSMUSG00000043144"/>
<dbReference type="eggNOG" id="KOG0223">
    <property type="taxonomic scope" value="Eukaryota"/>
</dbReference>
<dbReference type="GeneTree" id="ENSGT00940000161949"/>
<dbReference type="HOGENOM" id="CLU_020019_3_3_1"/>
<dbReference type="InParanoid" id="Q8C4A0"/>
<dbReference type="OMA" id="IGQNTHE"/>
<dbReference type="OrthoDB" id="3222at2759"/>
<dbReference type="PhylomeDB" id="Q8C4A0"/>
<dbReference type="TreeFam" id="TF312940"/>
<dbReference type="BioGRID-ORCS" id="11831">
    <property type="hits" value="1 hit in 79 CRISPR screens"/>
</dbReference>
<dbReference type="PRO" id="PR:Q8C4A0"/>
<dbReference type="Proteomes" id="UP000000589">
    <property type="component" value="Chromosome 15"/>
</dbReference>
<dbReference type="RNAct" id="Q8C4A0">
    <property type="molecule type" value="protein"/>
</dbReference>
<dbReference type="Bgee" id="ENSMUSG00000043144">
    <property type="expression patterns" value="Expressed in cerebellar vermis and 58 other cell types or tissues"/>
</dbReference>
<dbReference type="ExpressionAtlas" id="Q8C4A0">
    <property type="expression patterns" value="baseline and differential"/>
</dbReference>
<dbReference type="GO" id="GO:0030659">
    <property type="term" value="C:cytoplasmic vesicle membrane"/>
    <property type="evidence" value="ECO:0000250"/>
    <property type="project" value="UniProtKB"/>
</dbReference>
<dbReference type="GO" id="GO:0005886">
    <property type="term" value="C:plasma membrane"/>
    <property type="evidence" value="ECO:0000304"/>
    <property type="project" value="MGI"/>
</dbReference>
<dbReference type="GO" id="GO:0008519">
    <property type="term" value="F:ammonium channel activity"/>
    <property type="evidence" value="ECO:0000250"/>
    <property type="project" value="UniProtKB"/>
</dbReference>
<dbReference type="GO" id="GO:0035379">
    <property type="term" value="F:carbon dioxide transmembrane transporter activity"/>
    <property type="evidence" value="ECO:0000250"/>
    <property type="project" value="UniProtKB"/>
</dbReference>
<dbReference type="GO" id="GO:0005253">
    <property type="term" value="F:monoatomic anion channel activity"/>
    <property type="evidence" value="ECO:0000250"/>
    <property type="project" value="UniProtKB"/>
</dbReference>
<dbReference type="GO" id="GO:0061797">
    <property type="term" value="F:pH-gated chloride channel activity"/>
    <property type="evidence" value="ECO:0000250"/>
    <property type="project" value="UniProtKB"/>
</dbReference>
<dbReference type="GO" id="GO:0015250">
    <property type="term" value="F:water channel activity"/>
    <property type="evidence" value="ECO:0000250"/>
    <property type="project" value="UniProtKB"/>
</dbReference>
<dbReference type="GO" id="GO:0015670">
    <property type="term" value="P:carbon dioxide transport"/>
    <property type="evidence" value="ECO:0000250"/>
    <property type="project" value="UniProtKB"/>
</dbReference>
<dbReference type="GO" id="GO:0015706">
    <property type="term" value="P:nitrate transmembrane transport"/>
    <property type="evidence" value="ECO:0000250"/>
    <property type="project" value="UniProtKB"/>
</dbReference>
<dbReference type="GO" id="GO:0042476">
    <property type="term" value="P:odontogenesis"/>
    <property type="evidence" value="ECO:0007669"/>
    <property type="project" value="Ensembl"/>
</dbReference>
<dbReference type="GO" id="GO:0003097">
    <property type="term" value="P:renal water transport"/>
    <property type="evidence" value="ECO:0000250"/>
    <property type="project" value="UniProtKB"/>
</dbReference>
<dbReference type="GO" id="GO:0006833">
    <property type="term" value="P:water transport"/>
    <property type="evidence" value="ECO:0000304"/>
    <property type="project" value="MGI"/>
</dbReference>
<dbReference type="CDD" id="cd00333">
    <property type="entry name" value="MIP"/>
    <property type="match status" value="1"/>
</dbReference>
<dbReference type="FunFam" id="1.20.1080.10:FF:000003">
    <property type="entry name" value="Lens fiber major intrinsic"/>
    <property type="match status" value="1"/>
</dbReference>
<dbReference type="Gene3D" id="1.20.1080.10">
    <property type="entry name" value="Glycerol uptake facilitator protein"/>
    <property type="match status" value="1"/>
</dbReference>
<dbReference type="InterPro" id="IPR023271">
    <property type="entry name" value="Aquaporin-like"/>
</dbReference>
<dbReference type="InterPro" id="IPR023254">
    <property type="entry name" value="Aquaporin_6"/>
</dbReference>
<dbReference type="InterPro" id="IPR034294">
    <property type="entry name" value="Aquaporin_transptr"/>
</dbReference>
<dbReference type="InterPro" id="IPR000425">
    <property type="entry name" value="MIP"/>
</dbReference>
<dbReference type="InterPro" id="IPR022357">
    <property type="entry name" value="MIP_CS"/>
</dbReference>
<dbReference type="NCBIfam" id="TIGR00861">
    <property type="entry name" value="MIP"/>
    <property type="match status" value="1"/>
</dbReference>
<dbReference type="PANTHER" id="PTHR19139">
    <property type="entry name" value="AQUAPORIN TRANSPORTER"/>
    <property type="match status" value="1"/>
</dbReference>
<dbReference type="PANTHER" id="PTHR19139:SF113">
    <property type="entry name" value="AQUAPORIN-6"/>
    <property type="match status" value="1"/>
</dbReference>
<dbReference type="Pfam" id="PF00230">
    <property type="entry name" value="MIP"/>
    <property type="match status" value="1"/>
</dbReference>
<dbReference type="PRINTS" id="PR02018">
    <property type="entry name" value="AQUAPORIN6"/>
</dbReference>
<dbReference type="PRINTS" id="PR00783">
    <property type="entry name" value="MINTRINSICP"/>
</dbReference>
<dbReference type="SUPFAM" id="SSF81338">
    <property type="entry name" value="Aquaporin-like"/>
    <property type="match status" value="1"/>
</dbReference>
<dbReference type="PROSITE" id="PS00221">
    <property type="entry name" value="MIP"/>
    <property type="match status" value="1"/>
</dbReference>
<gene>
    <name evidence="6" type="primary">Aqp6</name>
</gene>
<keyword id="KW-0968">Cytoplasmic vesicle</keyword>
<keyword id="KW-0325">Glycoprotein</keyword>
<keyword id="KW-0472">Membrane</keyword>
<keyword id="KW-1185">Reference proteome</keyword>
<keyword id="KW-0677">Repeat</keyword>
<keyword id="KW-0812">Transmembrane</keyword>
<keyword id="KW-1133">Transmembrane helix</keyword>
<keyword id="KW-0813">Transport</keyword>
<protein>
    <recommendedName>
        <fullName evidence="3">Aquaporin-6</fullName>
        <shortName>AQP-6</shortName>
    </recommendedName>
</protein>
<organism>
    <name type="scientific">Mus musculus</name>
    <name type="common">Mouse</name>
    <dbReference type="NCBI Taxonomy" id="10090"/>
    <lineage>
        <taxon>Eukaryota</taxon>
        <taxon>Metazoa</taxon>
        <taxon>Chordata</taxon>
        <taxon>Craniata</taxon>
        <taxon>Vertebrata</taxon>
        <taxon>Euteleostomi</taxon>
        <taxon>Mammalia</taxon>
        <taxon>Eutheria</taxon>
        <taxon>Euarchontoglires</taxon>
        <taxon>Glires</taxon>
        <taxon>Rodentia</taxon>
        <taxon>Myomorpha</taxon>
        <taxon>Muroidea</taxon>
        <taxon>Muridae</taxon>
        <taxon>Murinae</taxon>
        <taxon>Mus</taxon>
        <taxon>Mus</taxon>
    </lineage>
</organism>
<feature type="chain" id="PRO_0000063956" description="Aquaporin-6">
    <location>
        <begin position="1"/>
        <end position="293"/>
    </location>
</feature>
<feature type="topological domain" description="Cytoplasmic" evidence="1">
    <location>
        <begin position="1"/>
        <end position="22"/>
    </location>
</feature>
<feature type="transmembrane region" description="Helical" evidence="1">
    <location>
        <begin position="23"/>
        <end position="43"/>
    </location>
</feature>
<feature type="topological domain" description="Extracellular" evidence="1">
    <location>
        <begin position="44"/>
        <end position="51"/>
    </location>
</feature>
<feature type="transmembrane region" description="Helical" evidence="1">
    <location>
        <begin position="52"/>
        <end position="70"/>
    </location>
</feature>
<feature type="topological domain" description="Cytoplasmic" evidence="1">
    <location>
        <begin position="71"/>
        <end position="75"/>
    </location>
</feature>
<feature type="intramembrane region" description="Discontinuously helical" evidence="1">
    <location>
        <begin position="76"/>
        <end position="85"/>
    </location>
</feature>
<feature type="topological domain" description="Cytoplasmic" evidence="1">
    <location>
        <begin position="86"/>
        <end position="96"/>
    </location>
</feature>
<feature type="transmembrane region" description="Helical" evidence="1">
    <location>
        <begin position="97"/>
        <end position="118"/>
    </location>
</feature>
<feature type="topological domain" description="Extracellular" evidence="1">
    <location>
        <begin position="119"/>
        <end position="138"/>
    </location>
</feature>
<feature type="transmembrane region" description="Helical" evidence="1">
    <location>
        <begin position="139"/>
        <end position="159"/>
    </location>
</feature>
<feature type="topological domain" description="Cytoplasmic" evidence="1">
    <location>
        <begin position="160"/>
        <end position="165"/>
    </location>
</feature>
<feature type="transmembrane region" description="Helical" evidence="1">
    <location>
        <begin position="166"/>
        <end position="185"/>
    </location>
</feature>
<feature type="topological domain" description="Extracellular" evidence="1">
    <location>
        <begin position="186"/>
        <end position="189"/>
    </location>
</feature>
<feature type="intramembrane region" description="Discontinuously helical" evidence="1">
    <location>
        <begin position="190"/>
        <end position="202"/>
    </location>
</feature>
<feature type="topological domain" description="Extracellular" evidence="1">
    <location>
        <begin position="203"/>
        <end position="210"/>
    </location>
</feature>
<feature type="transmembrane region" description="Helical" evidence="1">
    <location>
        <begin position="211"/>
        <end position="231"/>
    </location>
</feature>
<feature type="topological domain" description="Cytoplasmic" evidence="1">
    <location>
        <begin position="232"/>
        <end position="293"/>
    </location>
</feature>
<feature type="short sequence motif" description="NPA 1" evidence="1">
    <location>
        <begin position="79"/>
        <end position="81"/>
    </location>
</feature>
<feature type="short sequence motif" description="NPA 2" evidence="1">
    <location>
        <begin position="193"/>
        <end position="195"/>
    </location>
</feature>
<feature type="glycosylation site" description="N-linked (GlcNAc...) asparagine" evidence="4">
    <location>
        <position position="134"/>
    </location>
</feature>
<proteinExistence type="evidence at transcript level"/>
<sequence>MEPGLCSRAYLLVGGLWTAISKALFAEFLATGLYVFFGVGSVLPWPVALPSVLQIAITFNLATATAVQISWKTSGAHANPAVTLAYLVGSHISLPRAMAYIAAQLAGATAGAALLYGVTPGGIRETLGVNVVHNSTSTGQAVAVELVLTLQLVLCVFASMDGRQTLASPAAMIGTSVALGHLIGIYFTGCSMNPARSFGPAVIVGKFAVHWIFWVGPLTGAVLASLIYNFILFPDTKTVAQRLAILVGTTKVEKVVDLEPQKKESQTNSEDTECLTSPCEEAVRSFSFTLGLC</sequence>
<accession>Q8C4A0</accession>
<comment type="function">
    <text evidence="3">Aquaporins form homotetrameric transmembrane channels, with each monomer independently mediating water transport across the plasma membrane along its osmotic gradient. Unlike classical aquaporins, AQP6 is an intracellular channel with selective anion permeability, particularly for nitrate, and exhibits very low water permeability. It may also facilitate the transport of gases, such as CO2 and NH4(+), as demonstrated in vitro.</text>
</comment>
<comment type="catalytic activity">
    <reaction evidence="3">
        <text>nitrate(in) = nitrate(out)</text>
        <dbReference type="Rhea" id="RHEA:34923"/>
        <dbReference type="ChEBI" id="CHEBI:17632"/>
    </reaction>
</comment>
<comment type="catalytic activity">
    <reaction evidence="3">
        <text>iodide(out) = iodide(in)</text>
        <dbReference type="Rhea" id="RHEA:66324"/>
        <dbReference type="ChEBI" id="CHEBI:16382"/>
    </reaction>
</comment>
<comment type="catalytic activity">
    <reaction evidence="3">
        <text>bromide(in) = bromide(out)</text>
        <dbReference type="Rhea" id="RHEA:75383"/>
        <dbReference type="ChEBI" id="CHEBI:15858"/>
    </reaction>
</comment>
<comment type="catalytic activity">
    <reaction evidence="3">
        <text>chloride(in) = chloride(out)</text>
        <dbReference type="Rhea" id="RHEA:29823"/>
        <dbReference type="ChEBI" id="CHEBI:17996"/>
    </reaction>
</comment>
<comment type="catalytic activity">
    <reaction evidence="3">
        <text>Na(+)(in) = Na(+)(out)</text>
        <dbReference type="Rhea" id="RHEA:34963"/>
        <dbReference type="ChEBI" id="CHEBI:29101"/>
    </reaction>
</comment>
<comment type="catalytic activity">
    <reaction evidence="3">
        <text>H2O(in) = H2O(out)</text>
        <dbReference type="Rhea" id="RHEA:29667"/>
        <dbReference type="ChEBI" id="CHEBI:15377"/>
    </reaction>
</comment>
<comment type="catalytic activity">
    <reaction evidence="3">
        <text>CO2(out) = CO2(in)</text>
        <dbReference type="Rhea" id="RHEA:74891"/>
        <dbReference type="ChEBI" id="CHEBI:16526"/>
    </reaction>
</comment>
<comment type="catalytic activity">
    <reaction evidence="3">
        <text>NH4(+)(in) = NH4(+)(out)</text>
        <dbReference type="Rhea" id="RHEA:28747"/>
        <dbReference type="ChEBI" id="CHEBI:28938"/>
    </reaction>
</comment>
<comment type="subunit">
    <text evidence="2">Homotetramer; each monomer provides an independent solute pore.</text>
</comment>
<comment type="subcellular location">
    <subcellularLocation>
        <location evidence="3">Cytoplasmic vesicle membrane</location>
        <topology evidence="4">Multi-pass membrane protein</topology>
    </subcellularLocation>
</comment>
<comment type="domain">
    <text evidence="1">Aquaporins contain two tandem repeats each containing three membrane-spanning domains and a pore-forming loop with the signature motif Asn-Pro-Ala (NPA).</text>
</comment>
<comment type="similarity">
    <text evidence="5">Belongs to the MIP/aquaporin (TC 1.A.8) family.</text>
</comment>
<evidence type="ECO:0000250" key="1">
    <source>
        <dbReference type="UniProtKB" id="P41181"/>
    </source>
</evidence>
<evidence type="ECO:0000250" key="2">
    <source>
        <dbReference type="UniProtKB" id="P55064"/>
    </source>
</evidence>
<evidence type="ECO:0000250" key="3">
    <source>
        <dbReference type="UniProtKB" id="Q9WTY0"/>
    </source>
</evidence>
<evidence type="ECO:0000255" key="4"/>
<evidence type="ECO:0000305" key="5"/>
<evidence type="ECO:0000312" key="6">
    <source>
        <dbReference type="MGI" id="MGI:1341204"/>
    </source>
</evidence>
<reference key="1">
    <citation type="journal article" date="2005" name="Science">
        <title>The transcriptional landscape of the mammalian genome.</title>
        <authorList>
            <person name="Carninci P."/>
            <person name="Kasukawa T."/>
            <person name="Katayama S."/>
            <person name="Gough J."/>
            <person name="Frith M.C."/>
            <person name="Maeda N."/>
            <person name="Oyama R."/>
            <person name="Ravasi T."/>
            <person name="Lenhard B."/>
            <person name="Wells C."/>
            <person name="Kodzius R."/>
            <person name="Shimokawa K."/>
            <person name="Bajic V.B."/>
            <person name="Brenner S.E."/>
            <person name="Batalov S."/>
            <person name="Forrest A.R."/>
            <person name="Zavolan M."/>
            <person name="Davis M.J."/>
            <person name="Wilming L.G."/>
            <person name="Aidinis V."/>
            <person name="Allen J.E."/>
            <person name="Ambesi-Impiombato A."/>
            <person name="Apweiler R."/>
            <person name="Aturaliya R.N."/>
            <person name="Bailey T.L."/>
            <person name="Bansal M."/>
            <person name="Baxter L."/>
            <person name="Beisel K.W."/>
            <person name="Bersano T."/>
            <person name="Bono H."/>
            <person name="Chalk A.M."/>
            <person name="Chiu K.P."/>
            <person name="Choudhary V."/>
            <person name="Christoffels A."/>
            <person name="Clutterbuck D.R."/>
            <person name="Crowe M.L."/>
            <person name="Dalla E."/>
            <person name="Dalrymple B.P."/>
            <person name="de Bono B."/>
            <person name="Della Gatta G."/>
            <person name="di Bernardo D."/>
            <person name="Down T."/>
            <person name="Engstrom P."/>
            <person name="Fagiolini M."/>
            <person name="Faulkner G."/>
            <person name="Fletcher C.F."/>
            <person name="Fukushima T."/>
            <person name="Furuno M."/>
            <person name="Futaki S."/>
            <person name="Gariboldi M."/>
            <person name="Georgii-Hemming P."/>
            <person name="Gingeras T.R."/>
            <person name="Gojobori T."/>
            <person name="Green R.E."/>
            <person name="Gustincich S."/>
            <person name="Harbers M."/>
            <person name="Hayashi Y."/>
            <person name="Hensch T.K."/>
            <person name="Hirokawa N."/>
            <person name="Hill D."/>
            <person name="Huminiecki L."/>
            <person name="Iacono M."/>
            <person name="Ikeo K."/>
            <person name="Iwama A."/>
            <person name="Ishikawa T."/>
            <person name="Jakt M."/>
            <person name="Kanapin A."/>
            <person name="Katoh M."/>
            <person name="Kawasawa Y."/>
            <person name="Kelso J."/>
            <person name="Kitamura H."/>
            <person name="Kitano H."/>
            <person name="Kollias G."/>
            <person name="Krishnan S.P."/>
            <person name="Kruger A."/>
            <person name="Kummerfeld S.K."/>
            <person name="Kurochkin I.V."/>
            <person name="Lareau L.F."/>
            <person name="Lazarevic D."/>
            <person name="Lipovich L."/>
            <person name="Liu J."/>
            <person name="Liuni S."/>
            <person name="McWilliam S."/>
            <person name="Madan Babu M."/>
            <person name="Madera M."/>
            <person name="Marchionni L."/>
            <person name="Matsuda H."/>
            <person name="Matsuzawa S."/>
            <person name="Miki H."/>
            <person name="Mignone F."/>
            <person name="Miyake S."/>
            <person name="Morris K."/>
            <person name="Mottagui-Tabar S."/>
            <person name="Mulder N."/>
            <person name="Nakano N."/>
            <person name="Nakauchi H."/>
            <person name="Ng P."/>
            <person name="Nilsson R."/>
            <person name="Nishiguchi S."/>
            <person name="Nishikawa S."/>
            <person name="Nori F."/>
            <person name="Ohara O."/>
            <person name="Okazaki Y."/>
            <person name="Orlando V."/>
            <person name="Pang K.C."/>
            <person name="Pavan W.J."/>
            <person name="Pavesi G."/>
            <person name="Pesole G."/>
            <person name="Petrovsky N."/>
            <person name="Piazza S."/>
            <person name="Reed J."/>
            <person name="Reid J.F."/>
            <person name="Ring B.Z."/>
            <person name="Ringwald M."/>
            <person name="Rost B."/>
            <person name="Ruan Y."/>
            <person name="Salzberg S.L."/>
            <person name="Sandelin A."/>
            <person name="Schneider C."/>
            <person name="Schoenbach C."/>
            <person name="Sekiguchi K."/>
            <person name="Semple C.A."/>
            <person name="Seno S."/>
            <person name="Sessa L."/>
            <person name="Sheng Y."/>
            <person name="Shibata Y."/>
            <person name="Shimada H."/>
            <person name="Shimada K."/>
            <person name="Silva D."/>
            <person name="Sinclair B."/>
            <person name="Sperling S."/>
            <person name="Stupka E."/>
            <person name="Sugiura K."/>
            <person name="Sultana R."/>
            <person name="Takenaka Y."/>
            <person name="Taki K."/>
            <person name="Tammoja K."/>
            <person name="Tan S.L."/>
            <person name="Tang S."/>
            <person name="Taylor M.S."/>
            <person name="Tegner J."/>
            <person name="Teichmann S.A."/>
            <person name="Ueda H.R."/>
            <person name="van Nimwegen E."/>
            <person name="Verardo R."/>
            <person name="Wei C.L."/>
            <person name="Yagi K."/>
            <person name="Yamanishi H."/>
            <person name="Zabarovsky E."/>
            <person name="Zhu S."/>
            <person name="Zimmer A."/>
            <person name="Hide W."/>
            <person name="Bult C."/>
            <person name="Grimmond S.M."/>
            <person name="Teasdale R.D."/>
            <person name="Liu E.T."/>
            <person name="Brusic V."/>
            <person name="Quackenbush J."/>
            <person name="Wahlestedt C."/>
            <person name="Mattick J.S."/>
            <person name="Hume D.A."/>
            <person name="Kai C."/>
            <person name="Sasaki D."/>
            <person name="Tomaru Y."/>
            <person name="Fukuda S."/>
            <person name="Kanamori-Katayama M."/>
            <person name="Suzuki M."/>
            <person name="Aoki J."/>
            <person name="Arakawa T."/>
            <person name="Iida J."/>
            <person name="Imamura K."/>
            <person name="Itoh M."/>
            <person name="Kato T."/>
            <person name="Kawaji H."/>
            <person name="Kawagashira N."/>
            <person name="Kawashima T."/>
            <person name="Kojima M."/>
            <person name="Kondo S."/>
            <person name="Konno H."/>
            <person name="Nakano K."/>
            <person name="Ninomiya N."/>
            <person name="Nishio T."/>
            <person name="Okada M."/>
            <person name="Plessy C."/>
            <person name="Shibata K."/>
            <person name="Shiraki T."/>
            <person name="Suzuki S."/>
            <person name="Tagami M."/>
            <person name="Waki K."/>
            <person name="Watahiki A."/>
            <person name="Okamura-Oho Y."/>
            <person name="Suzuki H."/>
            <person name="Kawai J."/>
            <person name="Hayashizaki Y."/>
        </authorList>
    </citation>
    <scope>NUCLEOTIDE SEQUENCE [LARGE SCALE MRNA]</scope>
    <source>
        <strain>C57BL/6J</strain>
        <tissue>Cerebellum</tissue>
    </source>
</reference>